<name>CHEB1_VIBVU</name>
<feature type="chain" id="PRO_0000158039" description="Protein-glutamate methylesterase/protein-glutamine glutaminase 1">
    <location>
        <begin position="1"/>
        <end position="376"/>
    </location>
</feature>
<feature type="domain" description="Response regulatory" evidence="1">
    <location>
        <begin position="4"/>
        <end position="121"/>
    </location>
</feature>
<feature type="domain" description="CheB-type methylesterase" evidence="1">
    <location>
        <begin position="183"/>
        <end position="376"/>
    </location>
</feature>
<feature type="region of interest" description="Disordered" evidence="2">
    <location>
        <begin position="138"/>
        <end position="174"/>
    </location>
</feature>
<feature type="compositionally biased region" description="Polar residues" evidence="2">
    <location>
        <begin position="141"/>
        <end position="158"/>
    </location>
</feature>
<feature type="active site" evidence="1">
    <location>
        <position position="195"/>
    </location>
</feature>
<feature type="active site" evidence="1">
    <location>
        <position position="222"/>
    </location>
</feature>
<feature type="active site" evidence="1">
    <location>
        <position position="318"/>
    </location>
</feature>
<feature type="modified residue" description="4-aspartylphosphate" evidence="1">
    <location>
        <position position="55"/>
    </location>
</feature>
<sequence>MAIKVLVVDDSSFFRRRVSEIINAESRLEVIDVAVNGKEAVEKAKRLKPDVITMDIEMPVMDGISAVREIMASVPTPILMFSSLTHDGAKATLDALDAGALDFLPKKFEDIARNRDEAVSLLQQRVIQIASKRAFMRRPVASSTPVQERPQSTLNRPTTGLRREAPAQAPVSRAPVAAKFRASGKKYQLTAIGTSTGGPVALQKILTKLPANYPHPIVLIQHMPATFTAAFASRLNSLCKIQVKEAEDGDVLQAGVAYLAPGGKQMMIDGRPGAARLRIIDGGERMNYKPCVDVTFGSAAKIYADKVLSMVLTGMGADGREGARMLKSAGATIWAQDEDSCVVYGMPQAVAKAGLSTEDLPLERIAERMLVEVGLA</sequence>
<organism>
    <name type="scientific">Vibrio vulnificus (strain CMCP6)</name>
    <dbReference type="NCBI Taxonomy" id="216895"/>
    <lineage>
        <taxon>Bacteria</taxon>
        <taxon>Pseudomonadati</taxon>
        <taxon>Pseudomonadota</taxon>
        <taxon>Gammaproteobacteria</taxon>
        <taxon>Vibrionales</taxon>
        <taxon>Vibrionaceae</taxon>
        <taxon>Vibrio</taxon>
    </lineage>
</organism>
<reference key="1">
    <citation type="submission" date="2002-12" db="EMBL/GenBank/DDBJ databases">
        <title>Complete genome sequence of Vibrio vulnificus CMCP6.</title>
        <authorList>
            <person name="Rhee J.H."/>
            <person name="Kim S.Y."/>
            <person name="Chung S.S."/>
            <person name="Kim J.J."/>
            <person name="Moon Y.H."/>
            <person name="Jeong H."/>
            <person name="Choy H.E."/>
        </authorList>
    </citation>
    <scope>NUCLEOTIDE SEQUENCE [LARGE SCALE GENOMIC DNA]</scope>
    <source>
        <strain>CMCP6</strain>
    </source>
</reference>
<proteinExistence type="inferred from homology"/>
<accession>Q8DB67</accession>
<keyword id="KW-0145">Chemotaxis</keyword>
<keyword id="KW-0963">Cytoplasm</keyword>
<keyword id="KW-0378">Hydrolase</keyword>
<keyword id="KW-0597">Phosphoprotein</keyword>
<dbReference type="EC" id="3.1.1.61" evidence="1"/>
<dbReference type="EC" id="3.5.1.44" evidence="1"/>
<dbReference type="EMBL" id="AE016795">
    <property type="protein sequence ID" value="AAO10356.1"/>
    <property type="molecule type" value="Genomic_DNA"/>
</dbReference>
<dbReference type="RefSeq" id="WP_011079855.1">
    <property type="nucleotide sequence ID" value="NC_004459.3"/>
</dbReference>
<dbReference type="SMR" id="Q8DB67"/>
<dbReference type="KEGG" id="vvu:VV1_1956"/>
<dbReference type="HOGENOM" id="CLU_000445_51_0_6"/>
<dbReference type="Proteomes" id="UP000002275">
    <property type="component" value="Chromosome 1"/>
</dbReference>
<dbReference type="GO" id="GO:0005737">
    <property type="term" value="C:cytoplasm"/>
    <property type="evidence" value="ECO:0007669"/>
    <property type="project" value="UniProtKB-SubCell"/>
</dbReference>
<dbReference type="GO" id="GO:0000156">
    <property type="term" value="F:phosphorelay response regulator activity"/>
    <property type="evidence" value="ECO:0007669"/>
    <property type="project" value="InterPro"/>
</dbReference>
<dbReference type="GO" id="GO:0008984">
    <property type="term" value="F:protein-glutamate methylesterase activity"/>
    <property type="evidence" value="ECO:0007669"/>
    <property type="project" value="UniProtKB-UniRule"/>
</dbReference>
<dbReference type="GO" id="GO:0050568">
    <property type="term" value="F:protein-glutamine glutaminase activity"/>
    <property type="evidence" value="ECO:0007669"/>
    <property type="project" value="UniProtKB-UniRule"/>
</dbReference>
<dbReference type="GO" id="GO:0006935">
    <property type="term" value="P:chemotaxis"/>
    <property type="evidence" value="ECO:0007669"/>
    <property type="project" value="UniProtKB-UniRule"/>
</dbReference>
<dbReference type="CDD" id="cd16432">
    <property type="entry name" value="CheB_Rec"/>
    <property type="match status" value="1"/>
</dbReference>
<dbReference type="CDD" id="cd17541">
    <property type="entry name" value="REC_CheB-like"/>
    <property type="match status" value="1"/>
</dbReference>
<dbReference type="FunFam" id="3.40.50.2300:FF:000077">
    <property type="entry name" value="Chemotaxis response regulator"/>
    <property type="match status" value="1"/>
</dbReference>
<dbReference type="FunFam" id="3.40.50.180:FF:000001">
    <property type="entry name" value="Protein-glutamate methylesterase/protein-glutamine glutaminase"/>
    <property type="match status" value="1"/>
</dbReference>
<dbReference type="Gene3D" id="3.40.50.2300">
    <property type="match status" value="1"/>
</dbReference>
<dbReference type="Gene3D" id="3.40.50.180">
    <property type="entry name" value="Methylesterase CheB, C-terminal domain"/>
    <property type="match status" value="1"/>
</dbReference>
<dbReference type="HAMAP" id="MF_00099">
    <property type="entry name" value="CheB_chemtxs"/>
    <property type="match status" value="1"/>
</dbReference>
<dbReference type="InterPro" id="IPR008248">
    <property type="entry name" value="CheB-like"/>
</dbReference>
<dbReference type="InterPro" id="IPR035909">
    <property type="entry name" value="CheB_C"/>
</dbReference>
<dbReference type="InterPro" id="IPR011006">
    <property type="entry name" value="CheY-like_superfamily"/>
</dbReference>
<dbReference type="InterPro" id="IPR000673">
    <property type="entry name" value="Sig_transdc_resp-reg_Me-estase"/>
</dbReference>
<dbReference type="InterPro" id="IPR001789">
    <property type="entry name" value="Sig_transdc_resp-reg_receiver"/>
</dbReference>
<dbReference type="NCBIfam" id="NF001965">
    <property type="entry name" value="PRK00742.1"/>
    <property type="match status" value="1"/>
</dbReference>
<dbReference type="PANTHER" id="PTHR42872">
    <property type="entry name" value="PROTEIN-GLUTAMATE METHYLESTERASE/PROTEIN-GLUTAMINE GLUTAMINASE"/>
    <property type="match status" value="1"/>
</dbReference>
<dbReference type="PANTHER" id="PTHR42872:SF3">
    <property type="entry name" value="PROTEIN-GLUTAMATE METHYLESTERASE_PROTEIN-GLUTAMINE GLUTAMINASE 1"/>
    <property type="match status" value="1"/>
</dbReference>
<dbReference type="Pfam" id="PF01339">
    <property type="entry name" value="CheB_methylest"/>
    <property type="match status" value="1"/>
</dbReference>
<dbReference type="Pfam" id="PF00072">
    <property type="entry name" value="Response_reg"/>
    <property type="match status" value="1"/>
</dbReference>
<dbReference type="PIRSF" id="PIRSF000876">
    <property type="entry name" value="RR_chemtxs_CheB"/>
    <property type="match status" value="1"/>
</dbReference>
<dbReference type="SMART" id="SM00448">
    <property type="entry name" value="REC"/>
    <property type="match status" value="1"/>
</dbReference>
<dbReference type="SUPFAM" id="SSF52172">
    <property type="entry name" value="CheY-like"/>
    <property type="match status" value="1"/>
</dbReference>
<dbReference type="SUPFAM" id="SSF52738">
    <property type="entry name" value="Methylesterase CheB, C-terminal domain"/>
    <property type="match status" value="1"/>
</dbReference>
<dbReference type="PROSITE" id="PS50122">
    <property type="entry name" value="CHEB"/>
    <property type="match status" value="1"/>
</dbReference>
<dbReference type="PROSITE" id="PS50110">
    <property type="entry name" value="RESPONSE_REGULATORY"/>
    <property type="match status" value="1"/>
</dbReference>
<protein>
    <recommendedName>
        <fullName evidence="1">Protein-glutamate methylesterase/protein-glutamine glutaminase 1</fullName>
        <ecNumber evidence="1">3.1.1.61</ecNumber>
        <ecNumber evidence="1">3.5.1.44</ecNumber>
    </recommendedName>
</protein>
<evidence type="ECO:0000255" key="1">
    <source>
        <dbReference type="HAMAP-Rule" id="MF_00099"/>
    </source>
</evidence>
<evidence type="ECO:0000256" key="2">
    <source>
        <dbReference type="SAM" id="MobiDB-lite"/>
    </source>
</evidence>
<comment type="function">
    <text evidence="1">Involved in chemotaxis. Part of a chemotaxis signal transduction system that modulates chemotaxis in response to various stimuli. Catalyzes the demethylation of specific methylglutamate residues introduced into the chemoreceptors (methyl-accepting chemotaxis proteins or MCP) by CheR. Also mediates the irreversible deamidation of specific glutamine residues to glutamic acid.</text>
</comment>
<comment type="catalytic activity">
    <reaction evidence="1">
        <text>[protein]-L-glutamate 5-O-methyl ester + H2O = L-glutamyl-[protein] + methanol + H(+)</text>
        <dbReference type="Rhea" id="RHEA:23236"/>
        <dbReference type="Rhea" id="RHEA-COMP:10208"/>
        <dbReference type="Rhea" id="RHEA-COMP:10311"/>
        <dbReference type="ChEBI" id="CHEBI:15377"/>
        <dbReference type="ChEBI" id="CHEBI:15378"/>
        <dbReference type="ChEBI" id="CHEBI:17790"/>
        <dbReference type="ChEBI" id="CHEBI:29973"/>
        <dbReference type="ChEBI" id="CHEBI:82795"/>
        <dbReference type="EC" id="3.1.1.61"/>
    </reaction>
</comment>
<comment type="catalytic activity">
    <reaction evidence="1">
        <text>L-glutaminyl-[protein] + H2O = L-glutamyl-[protein] + NH4(+)</text>
        <dbReference type="Rhea" id="RHEA:16441"/>
        <dbReference type="Rhea" id="RHEA-COMP:10207"/>
        <dbReference type="Rhea" id="RHEA-COMP:10208"/>
        <dbReference type="ChEBI" id="CHEBI:15377"/>
        <dbReference type="ChEBI" id="CHEBI:28938"/>
        <dbReference type="ChEBI" id="CHEBI:29973"/>
        <dbReference type="ChEBI" id="CHEBI:30011"/>
        <dbReference type="EC" id="3.5.1.44"/>
    </reaction>
</comment>
<comment type="subcellular location">
    <subcellularLocation>
        <location evidence="1">Cytoplasm</location>
    </subcellularLocation>
</comment>
<comment type="domain">
    <text evidence="1">Contains a C-terminal catalytic domain, and an N-terminal region which modulates catalytic activity.</text>
</comment>
<comment type="PTM">
    <text evidence="1">Phosphorylated by CheA. Phosphorylation of the N-terminal regulatory domain activates the methylesterase activity.</text>
</comment>
<comment type="similarity">
    <text evidence="1">Belongs to the CheB family.</text>
</comment>
<gene>
    <name evidence="1" type="primary">cheB1</name>
    <name type="ordered locus">VV1_1956</name>
</gene>